<feature type="chain" id="PRO_0000165923" description="Dihydropyrimidinase-related protein 4">
    <location>
        <begin position="1" status="less than"/>
        <end position="564"/>
    </location>
</feature>
<feature type="modified residue" description="Phosphoserine" evidence="3">
    <location>
        <position position="529"/>
    </location>
</feature>
<feature type="modified residue" description="Phosphoserine" evidence="3">
    <location>
        <position position="536"/>
    </location>
</feature>
<feature type="non-terminal residue">
    <location>
        <position position="1"/>
    </location>
</feature>
<accession>Q62951</accession>
<protein>
    <recommendedName>
        <fullName>Dihydropyrimidinase-related protein 4</fullName>
        <shortName>DRP-4</shortName>
    </recommendedName>
    <alternativeName>
        <fullName>Collapsin response mediator protein 3</fullName>
        <shortName>CRMP-3</shortName>
    </alternativeName>
    <alternativeName>
        <fullName>UNC33-like phosphoprotein 4</fullName>
        <shortName>ULIP-4</shortName>
    </alternativeName>
</protein>
<organism>
    <name type="scientific">Rattus norvegicus</name>
    <name type="common">Rat</name>
    <dbReference type="NCBI Taxonomy" id="10116"/>
    <lineage>
        <taxon>Eukaryota</taxon>
        <taxon>Metazoa</taxon>
        <taxon>Chordata</taxon>
        <taxon>Craniata</taxon>
        <taxon>Vertebrata</taxon>
        <taxon>Euteleostomi</taxon>
        <taxon>Mammalia</taxon>
        <taxon>Eutheria</taxon>
        <taxon>Euarchontoglires</taxon>
        <taxon>Glires</taxon>
        <taxon>Rodentia</taxon>
        <taxon>Myomorpha</taxon>
        <taxon>Muroidea</taxon>
        <taxon>Muridae</taxon>
        <taxon>Murinae</taxon>
        <taxon>Rattus</taxon>
    </lineage>
</organism>
<gene>
    <name type="primary">Dpysl4</name>
    <name type="synonym">Crmp3</name>
    <name type="synonym">Ulip4</name>
</gene>
<reference key="1">
    <citation type="journal article" date="1996" name="J. Neurosci.">
        <title>A family of rat CRMP genes is differentially expressed in the nervous system.</title>
        <authorList>
            <person name="Wang L."/>
            <person name="Strittmatter S.M."/>
        </authorList>
    </citation>
    <scope>NUCLEOTIDE SEQUENCE [MRNA]</scope>
    <source>
        <tissue>Brain</tissue>
    </source>
</reference>
<reference key="2">
    <citation type="submission" date="2007-07" db="UniProtKB">
        <authorList>
            <person name="Lubec G."/>
            <person name="Diao W."/>
            <person name="Kang S.U."/>
        </authorList>
    </citation>
    <scope>PROTEIN SEQUENCE OF 36-48; 119-149; 166-181; 263-285; 338-353; 367-382; 416-432 AND 489-511</scope>
    <scope>IDENTIFICATION BY MASS SPECTROMETRY</scope>
    <source>
        <strain>Sprague-Dawley</strain>
        <tissue>Brain</tissue>
        <tissue>Hippocampus</tissue>
    </source>
</reference>
<evidence type="ECO:0000250" key="1"/>
<evidence type="ECO:0000250" key="2">
    <source>
        <dbReference type="UniProtKB" id="O14531"/>
    </source>
</evidence>
<evidence type="ECO:0000250" key="3">
    <source>
        <dbReference type="UniProtKB" id="O35098"/>
    </source>
</evidence>
<evidence type="ECO:0000305" key="4"/>
<proteinExistence type="evidence at protein level"/>
<comment type="function">
    <text evidence="1">Necessary for signaling by class 3 semaphorins and subsequent remodeling of the cytoskeleton. Plays a role in axon guidance, neuronal growth cone collapse and cell migration (By similarity).</text>
</comment>
<comment type="subunit">
    <text evidence="2 3">Homotetramer, and heterotetramer with CRMP1, DPYSL2, DPYSL3 or DPYSL5. Interacts with PLEXA1 (By similarity). Interacts with FLNA (By similarity).</text>
</comment>
<comment type="subcellular location">
    <subcellularLocation>
        <location evidence="1">Cytoplasm</location>
    </subcellularLocation>
</comment>
<comment type="developmental stage">
    <text>Expressed transiently in developing spinal cord and selectively in the postnatal cerebellum.</text>
</comment>
<comment type="similarity">
    <text evidence="4">Belongs to the metallo-dependent hydrolases superfamily. Hydantoinase/dihydropyrimidinase family.</text>
</comment>
<comment type="caution">
    <text evidence="4">Lacks most of the conserved residues that are essential for binding the metal cofactor and hence for dihydropyrimidinase activity. Its enzyme activity is therefore unsure.</text>
</comment>
<dbReference type="EMBL" id="U52103">
    <property type="protein sequence ID" value="AAB03281.1"/>
    <property type="molecule type" value="mRNA"/>
</dbReference>
<dbReference type="RefSeq" id="NP_037065.1">
    <property type="nucleotide sequence ID" value="NM_012933.1"/>
</dbReference>
<dbReference type="SMR" id="Q62951"/>
<dbReference type="BioGRID" id="247452">
    <property type="interactions" value="2"/>
</dbReference>
<dbReference type="FunCoup" id="Q62951">
    <property type="interactions" value="186"/>
</dbReference>
<dbReference type="IntAct" id="Q62951">
    <property type="interactions" value="3"/>
</dbReference>
<dbReference type="MINT" id="Q62951"/>
<dbReference type="STRING" id="10116.ENSRNOP00000029334"/>
<dbReference type="MEROPS" id="M38.977"/>
<dbReference type="GlyGen" id="Q62951">
    <property type="glycosylation" value="2 sites, 1 O-linked glycan (1 site)"/>
</dbReference>
<dbReference type="iPTMnet" id="Q62951"/>
<dbReference type="PhosphoSitePlus" id="Q62951"/>
<dbReference type="jPOST" id="Q62951"/>
<dbReference type="PaxDb" id="10116-ENSRNOP00000029334"/>
<dbReference type="GeneID" id="25417"/>
<dbReference type="KEGG" id="rno:25417"/>
<dbReference type="UCSC" id="RGD:2409">
    <property type="organism name" value="rat"/>
</dbReference>
<dbReference type="AGR" id="RGD:2409"/>
<dbReference type="CTD" id="10570"/>
<dbReference type="RGD" id="2409">
    <property type="gene designation" value="Dpysl4"/>
</dbReference>
<dbReference type="eggNOG" id="KOG2584">
    <property type="taxonomic scope" value="Eukaryota"/>
</dbReference>
<dbReference type="InParanoid" id="Q62951"/>
<dbReference type="OrthoDB" id="10258955at2759"/>
<dbReference type="PhylomeDB" id="Q62951"/>
<dbReference type="Reactome" id="R-RNO-399956">
    <property type="pathway name" value="CRMPs in Sema3A signaling"/>
</dbReference>
<dbReference type="Proteomes" id="UP000002494">
    <property type="component" value="Unplaced"/>
</dbReference>
<dbReference type="GO" id="GO:0005829">
    <property type="term" value="C:cytosol"/>
    <property type="evidence" value="ECO:0000318"/>
    <property type="project" value="GO_Central"/>
</dbReference>
<dbReference type="GO" id="GO:0031005">
    <property type="term" value="F:filamin binding"/>
    <property type="evidence" value="ECO:0000266"/>
    <property type="project" value="RGD"/>
</dbReference>
<dbReference type="GO" id="GO:0016812">
    <property type="term" value="F:hydrolase activity, acting on carbon-nitrogen (but not peptide) bonds, in cyclic amides"/>
    <property type="evidence" value="ECO:0000318"/>
    <property type="project" value="GO_Central"/>
</dbReference>
<dbReference type="GO" id="GO:0051219">
    <property type="term" value="F:phosphoprotein binding"/>
    <property type="evidence" value="ECO:0000266"/>
    <property type="project" value="RGD"/>
</dbReference>
<dbReference type="GO" id="GO:0048666">
    <property type="term" value="P:neuron development"/>
    <property type="evidence" value="ECO:0000270"/>
    <property type="project" value="RGD"/>
</dbReference>
<dbReference type="CDD" id="cd01314">
    <property type="entry name" value="D-HYD"/>
    <property type="match status" value="1"/>
</dbReference>
<dbReference type="FunFam" id="3.20.20.140:FF:000254">
    <property type="entry name" value="Dihydropyrimidinase like 2"/>
    <property type="match status" value="1"/>
</dbReference>
<dbReference type="FunFam" id="2.30.40.10:FF:000021">
    <property type="entry name" value="Dihydropyrimidinase-related protein 2"/>
    <property type="match status" value="1"/>
</dbReference>
<dbReference type="Gene3D" id="3.20.20.140">
    <property type="entry name" value="Metal-dependent hydrolases"/>
    <property type="match status" value="1"/>
</dbReference>
<dbReference type="Gene3D" id="2.30.40.10">
    <property type="entry name" value="Urease, subunit C, domain 1"/>
    <property type="match status" value="1"/>
</dbReference>
<dbReference type="InterPro" id="IPR006680">
    <property type="entry name" value="Amidohydro-rel"/>
</dbReference>
<dbReference type="InterPro" id="IPR011778">
    <property type="entry name" value="Hydantoinase/dihydroPyrase"/>
</dbReference>
<dbReference type="InterPro" id="IPR011059">
    <property type="entry name" value="Metal-dep_hydrolase_composite"/>
</dbReference>
<dbReference type="InterPro" id="IPR032466">
    <property type="entry name" value="Metal_Hydrolase"/>
</dbReference>
<dbReference type="InterPro" id="IPR050378">
    <property type="entry name" value="Metallo-dep_Hydrolases_sf"/>
</dbReference>
<dbReference type="NCBIfam" id="TIGR02033">
    <property type="entry name" value="D-hydantoinase"/>
    <property type="match status" value="1"/>
</dbReference>
<dbReference type="PANTHER" id="PTHR11647:SF55">
    <property type="entry name" value="DIHYDROPYRIMIDINASE-RELATED PROTEIN 4"/>
    <property type="match status" value="1"/>
</dbReference>
<dbReference type="PANTHER" id="PTHR11647">
    <property type="entry name" value="HYDRANTOINASE/DIHYDROPYRIMIDINASE FAMILY MEMBER"/>
    <property type="match status" value="1"/>
</dbReference>
<dbReference type="Pfam" id="PF01979">
    <property type="entry name" value="Amidohydro_1"/>
    <property type="match status" value="1"/>
</dbReference>
<dbReference type="SUPFAM" id="SSF51338">
    <property type="entry name" value="Composite domain of metallo-dependent hydrolases"/>
    <property type="match status" value="2"/>
</dbReference>
<dbReference type="SUPFAM" id="SSF51556">
    <property type="entry name" value="Metallo-dependent hydrolases"/>
    <property type="match status" value="1"/>
</dbReference>
<sequence>IPRITSDRLLIKGGKIVNDDQSFHADLYVEDGLIKQIGENLIVPGGIKTIDAHGLMVLPGGVDVHTRLQMPVLGMTPADDFCQGTKAALAGGTTMILDHVFPDAGVSLLAAYEQWRERADSAACCDYSLHVDIPRWHESTKEELEALVRDKGVNSFLVFMAYKDRCQCTDGQIYEIFSLIRDLGAVAQVHAENGDIVEEEQKRLLEQGITGPEGHVLSHPEEVEAEAVYRAVTIAKQANCPLYITKVMSKGAADMVAQAKRRGVVVFGEPITASLGTDGSHYWSKNWAKAAAFVTSPPINPDPTTADHLTSLLSSGDLQVTGSAHCTFTTAQKAVGKDNFTLIPEGINGIEERMSVVWEKCVASGKMDENEFVAVTSTNAAKIFNFYPRKGRVAVGSDADLVIWNPRATKVISAKSHNLNVEYNIFEGVECRGMPTVVISQGRVVLEDGNLLVTPGAGRFIPRKTFPDFVYKRIKARNRLAEIHGVPRGLYDGPVHEVMLPAKPGSGTQARASCPGKISVPPVRNLHQSGFSLSGSQADDHIARRTAQKIMAPPGGRSNITSLS</sequence>
<keyword id="KW-0963">Cytoplasm</keyword>
<keyword id="KW-0903">Direct protein sequencing</keyword>
<keyword id="KW-0597">Phosphoprotein</keyword>
<keyword id="KW-1185">Reference proteome</keyword>
<name>DPYL4_RAT</name>